<accession>Q01Q49</accession>
<organism>
    <name type="scientific">Solibacter usitatus (strain Ellin6076)</name>
    <dbReference type="NCBI Taxonomy" id="234267"/>
    <lineage>
        <taxon>Bacteria</taxon>
        <taxon>Pseudomonadati</taxon>
        <taxon>Acidobacteriota</taxon>
        <taxon>Terriglobia</taxon>
        <taxon>Bryobacterales</taxon>
        <taxon>Solibacteraceae</taxon>
        <taxon>Candidatus Solibacter</taxon>
    </lineage>
</organism>
<proteinExistence type="inferred from homology"/>
<dbReference type="EC" id="6.3.2.8" evidence="1"/>
<dbReference type="EMBL" id="CP000473">
    <property type="protein sequence ID" value="ABJ88221.1"/>
    <property type="molecule type" value="Genomic_DNA"/>
</dbReference>
<dbReference type="SMR" id="Q01Q49"/>
<dbReference type="FunCoup" id="Q01Q49">
    <property type="interactions" value="369"/>
</dbReference>
<dbReference type="STRING" id="234267.Acid_7310"/>
<dbReference type="KEGG" id="sus:Acid_7310"/>
<dbReference type="eggNOG" id="COG0773">
    <property type="taxonomic scope" value="Bacteria"/>
</dbReference>
<dbReference type="HOGENOM" id="CLU_028104_2_1_0"/>
<dbReference type="InParanoid" id="Q01Q49"/>
<dbReference type="UniPathway" id="UPA00219"/>
<dbReference type="GO" id="GO:0005737">
    <property type="term" value="C:cytoplasm"/>
    <property type="evidence" value="ECO:0007669"/>
    <property type="project" value="UniProtKB-SubCell"/>
</dbReference>
<dbReference type="GO" id="GO:0005524">
    <property type="term" value="F:ATP binding"/>
    <property type="evidence" value="ECO:0007669"/>
    <property type="project" value="UniProtKB-UniRule"/>
</dbReference>
<dbReference type="GO" id="GO:0008763">
    <property type="term" value="F:UDP-N-acetylmuramate-L-alanine ligase activity"/>
    <property type="evidence" value="ECO:0007669"/>
    <property type="project" value="UniProtKB-UniRule"/>
</dbReference>
<dbReference type="GO" id="GO:0051301">
    <property type="term" value="P:cell division"/>
    <property type="evidence" value="ECO:0007669"/>
    <property type="project" value="UniProtKB-KW"/>
</dbReference>
<dbReference type="GO" id="GO:0071555">
    <property type="term" value="P:cell wall organization"/>
    <property type="evidence" value="ECO:0007669"/>
    <property type="project" value="UniProtKB-KW"/>
</dbReference>
<dbReference type="GO" id="GO:0009252">
    <property type="term" value="P:peptidoglycan biosynthetic process"/>
    <property type="evidence" value="ECO:0007669"/>
    <property type="project" value="UniProtKB-UniRule"/>
</dbReference>
<dbReference type="GO" id="GO:0008360">
    <property type="term" value="P:regulation of cell shape"/>
    <property type="evidence" value="ECO:0007669"/>
    <property type="project" value="UniProtKB-KW"/>
</dbReference>
<dbReference type="Gene3D" id="3.90.190.20">
    <property type="entry name" value="Mur ligase, C-terminal domain"/>
    <property type="match status" value="1"/>
</dbReference>
<dbReference type="Gene3D" id="3.40.1190.10">
    <property type="entry name" value="Mur-like, catalytic domain"/>
    <property type="match status" value="1"/>
</dbReference>
<dbReference type="Gene3D" id="3.40.50.720">
    <property type="entry name" value="NAD(P)-binding Rossmann-like Domain"/>
    <property type="match status" value="1"/>
</dbReference>
<dbReference type="HAMAP" id="MF_00046">
    <property type="entry name" value="MurC"/>
    <property type="match status" value="1"/>
</dbReference>
<dbReference type="InterPro" id="IPR036565">
    <property type="entry name" value="Mur-like_cat_sf"/>
</dbReference>
<dbReference type="InterPro" id="IPR004101">
    <property type="entry name" value="Mur_ligase_C"/>
</dbReference>
<dbReference type="InterPro" id="IPR036615">
    <property type="entry name" value="Mur_ligase_C_dom_sf"/>
</dbReference>
<dbReference type="InterPro" id="IPR013221">
    <property type="entry name" value="Mur_ligase_cen"/>
</dbReference>
<dbReference type="InterPro" id="IPR000713">
    <property type="entry name" value="Mur_ligase_N"/>
</dbReference>
<dbReference type="InterPro" id="IPR050061">
    <property type="entry name" value="MurCDEF_pg_biosynth"/>
</dbReference>
<dbReference type="InterPro" id="IPR005758">
    <property type="entry name" value="UDP-N-AcMur_Ala_ligase_MurC"/>
</dbReference>
<dbReference type="NCBIfam" id="TIGR01082">
    <property type="entry name" value="murC"/>
    <property type="match status" value="1"/>
</dbReference>
<dbReference type="PANTHER" id="PTHR43445:SF3">
    <property type="entry name" value="UDP-N-ACETYLMURAMATE--L-ALANINE LIGASE"/>
    <property type="match status" value="1"/>
</dbReference>
<dbReference type="PANTHER" id="PTHR43445">
    <property type="entry name" value="UDP-N-ACETYLMURAMATE--L-ALANINE LIGASE-RELATED"/>
    <property type="match status" value="1"/>
</dbReference>
<dbReference type="Pfam" id="PF01225">
    <property type="entry name" value="Mur_ligase"/>
    <property type="match status" value="1"/>
</dbReference>
<dbReference type="Pfam" id="PF02875">
    <property type="entry name" value="Mur_ligase_C"/>
    <property type="match status" value="1"/>
</dbReference>
<dbReference type="Pfam" id="PF08245">
    <property type="entry name" value="Mur_ligase_M"/>
    <property type="match status" value="1"/>
</dbReference>
<dbReference type="SUPFAM" id="SSF51984">
    <property type="entry name" value="MurCD N-terminal domain"/>
    <property type="match status" value="1"/>
</dbReference>
<dbReference type="SUPFAM" id="SSF53623">
    <property type="entry name" value="MurD-like peptide ligases, catalytic domain"/>
    <property type="match status" value="1"/>
</dbReference>
<dbReference type="SUPFAM" id="SSF53244">
    <property type="entry name" value="MurD-like peptide ligases, peptide-binding domain"/>
    <property type="match status" value="1"/>
</dbReference>
<keyword id="KW-0067">ATP-binding</keyword>
<keyword id="KW-0131">Cell cycle</keyword>
<keyword id="KW-0132">Cell division</keyword>
<keyword id="KW-0133">Cell shape</keyword>
<keyword id="KW-0961">Cell wall biogenesis/degradation</keyword>
<keyword id="KW-0963">Cytoplasm</keyword>
<keyword id="KW-0436">Ligase</keyword>
<keyword id="KW-0547">Nucleotide-binding</keyword>
<keyword id="KW-0573">Peptidoglycan synthesis</keyword>
<reference key="1">
    <citation type="journal article" date="2009" name="Appl. Environ. Microbiol.">
        <title>Three genomes from the phylum Acidobacteria provide insight into the lifestyles of these microorganisms in soils.</title>
        <authorList>
            <person name="Ward N.L."/>
            <person name="Challacombe J.F."/>
            <person name="Janssen P.H."/>
            <person name="Henrissat B."/>
            <person name="Coutinho P.M."/>
            <person name="Wu M."/>
            <person name="Xie G."/>
            <person name="Haft D.H."/>
            <person name="Sait M."/>
            <person name="Badger J."/>
            <person name="Barabote R.D."/>
            <person name="Bradley B."/>
            <person name="Brettin T.S."/>
            <person name="Brinkac L.M."/>
            <person name="Bruce D."/>
            <person name="Creasy T."/>
            <person name="Daugherty S.C."/>
            <person name="Davidsen T.M."/>
            <person name="DeBoy R.T."/>
            <person name="Detter J.C."/>
            <person name="Dodson R.J."/>
            <person name="Durkin A.S."/>
            <person name="Ganapathy A."/>
            <person name="Gwinn-Giglio M."/>
            <person name="Han C.S."/>
            <person name="Khouri H."/>
            <person name="Kiss H."/>
            <person name="Kothari S.P."/>
            <person name="Madupu R."/>
            <person name="Nelson K.E."/>
            <person name="Nelson W.C."/>
            <person name="Paulsen I."/>
            <person name="Penn K."/>
            <person name="Ren Q."/>
            <person name="Rosovitz M.J."/>
            <person name="Selengut J.D."/>
            <person name="Shrivastava S."/>
            <person name="Sullivan S.A."/>
            <person name="Tapia R."/>
            <person name="Thompson L.S."/>
            <person name="Watkins K.L."/>
            <person name="Yang Q."/>
            <person name="Yu C."/>
            <person name="Zafar N."/>
            <person name="Zhou L."/>
            <person name="Kuske C.R."/>
        </authorList>
    </citation>
    <scope>NUCLEOTIDE SEQUENCE [LARGE SCALE GENOMIC DNA]</scope>
    <source>
        <strain>Ellin6076</strain>
    </source>
</reference>
<feature type="chain" id="PRO_0000336869" description="UDP-N-acetylmuramate--L-alanine ligase">
    <location>
        <begin position="1"/>
        <end position="472"/>
    </location>
</feature>
<feature type="binding site" evidence="1">
    <location>
        <begin position="123"/>
        <end position="129"/>
    </location>
    <ligand>
        <name>ATP</name>
        <dbReference type="ChEBI" id="CHEBI:30616"/>
    </ligand>
</feature>
<name>MURC_SOLUE</name>
<sequence length="472" mass="51486">MTDKPKQYVKEMFFRPQHLHFTGIGGIGMSGIAEVLLNLGYQISGSDVKLSPITERLAAMGARVFEGHAASNIAGARALVVSSAVDEQNPEVQEARRISIPVIPRGELLAELMRLKYGIAVAGSHGKTTTTSMAATILNYAGLDPTVVVGGRVGTMGGSNARVGHSDFLVVESDESDGSFLKLAPIIAVVTNVDREHLDHYPDLDAIRAAFLEFVNKVPFYGAVIVCLDDANVQGLLPEIRRRTITYGTTAQADMEAGDISCGPFASEFRLRYRTADLGRFRLHIPGRHNVLNAMAAIAVAMELEVKPDTIREALETFSGVDRRFQLRGQERGIAVVDDYGHHPTEIRATLDGARQCGFRRIHVLFQPHRYTRTFHLMDEFARSFHQADSLFVMDIYAASEKPIPGVTAESLVERIRQFGHRGVEYVGTLDRGVDALVAAASEGDLVLTLGAGSVYQAGEKVLERLRTEGKG</sequence>
<gene>
    <name evidence="1" type="primary">murC</name>
    <name type="ordered locus">Acid_7310</name>
</gene>
<protein>
    <recommendedName>
        <fullName evidence="1">UDP-N-acetylmuramate--L-alanine ligase</fullName>
        <ecNumber evidence="1">6.3.2.8</ecNumber>
    </recommendedName>
    <alternativeName>
        <fullName evidence="1">UDP-N-acetylmuramoyl-L-alanine synthetase</fullName>
    </alternativeName>
</protein>
<evidence type="ECO:0000255" key="1">
    <source>
        <dbReference type="HAMAP-Rule" id="MF_00046"/>
    </source>
</evidence>
<comment type="function">
    <text evidence="1">Cell wall formation.</text>
</comment>
<comment type="catalytic activity">
    <reaction evidence="1">
        <text>UDP-N-acetyl-alpha-D-muramate + L-alanine + ATP = UDP-N-acetyl-alpha-D-muramoyl-L-alanine + ADP + phosphate + H(+)</text>
        <dbReference type="Rhea" id="RHEA:23372"/>
        <dbReference type="ChEBI" id="CHEBI:15378"/>
        <dbReference type="ChEBI" id="CHEBI:30616"/>
        <dbReference type="ChEBI" id="CHEBI:43474"/>
        <dbReference type="ChEBI" id="CHEBI:57972"/>
        <dbReference type="ChEBI" id="CHEBI:70757"/>
        <dbReference type="ChEBI" id="CHEBI:83898"/>
        <dbReference type="ChEBI" id="CHEBI:456216"/>
        <dbReference type="EC" id="6.3.2.8"/>
    </reaction>
</comment>
<comment type="pathway">
    <text evidence="1">Cell wall biogenesis; peptidoglycan biosynthesis.</text>
</comment>
<comment type="subcellular location">
    <subcellularLocation>
        <location evidence="1">Cytoplasm</location>
    </subcellularLocation>
</comment>
<comment type="similarity">
    <text evidence="1">Belongs to the MurCDEF family.</text>
</comment>